<gene>
    <name evidence="1" type="primary">rsmA</name>
    <name evidence="1" type="synonym">ksgA</name>
    <name type="ordered locus">VFMJ11_0274</name>
</gene>
<reference key="1">
    <citation type="submission" date="2008-08" db="EMBL/GenBank/DDBJ databases">
        <title>Complete sequence of Vibrio fischeri strain MJ11.</title>
        <authorList>
            <person name="Mandel M.J."/>
            <person name="Stabb E.V."/>
            <person name="Ruby E.G."/>
            <person name="Ferriera S."/>
            <person name="Johnson J."/>
            <person name="Kravitz S."/>
            <person name="Beeson K."/>
            <person name="Sutton G."/>
            <person name="Rogers Y.-H."/>
            <person name="Friedman R."/>
            <person name="Frazier M."/>
            <person name="Venter J.C."/>
        </authorList>
    </citation>
    <scope>NUCLEOTIDE SEQUENCE [LARGE SCALE GENOMIC DNA]</scope>
    <source>
        <strain>MJ11</strain>
    </source>
</reference>
<feature type="chain" id="PRO_1000130335" description="Ribosomal RNA small subunit methyltransferase A">
    <location>
        <begin position="1"/>
        <end position="272"/>
    </location>
</feature>
<feature type="binding site" evidence="1">
    <location>
        <position position="20"/>
    </location>
    <ligand>
        <name>S-adenosyl-L-methionine</name>
        <dbReference type="ChEBI" id="CHEBI:59789"/>
    </ligand>
</feature>
<feature type="binding site" evidence="1">
    <location>
        <position position="22"/>
    </location>
    <ligand>
        <name>S-adenosyl-L-methionine</name>
        <dbReference type="ChEBI" id="CHEBI:59789"/>
    </ligand>
</feature>
<feature type="binding site" evidence="1">
    <location>
        <position position="47"/>
    </location>
    <ligand>
        <name>S-adenosyl-L-methionine</name>
        <dbReference type="ChEBI" id="CHEBI:59789"/>
    </ligand>
</feature>
<feature type="binding site" evidence="1">
    <location>
        <position position="68"/>
    </location>
    <ligand>
        <name>S-adenosyl-L-methionine</name>
        <dbReference type="ChEBI" id="CHEBI:59789"/>
    </ligand>
</feature>
<feature type="binding site" evidence="1">
    <location>
        <position position="93"/>
    </location>
    <ligand>
        <name>S-adenosyl-L-methionine</name>
        <dbReference type="ChEBI" id="CHEBI:59789"/>
    </ligand>
</feature>
<feature type="binding site" evidence="1">
    <location>
        <position position="114"/>
    </location>
    <ligand>
        <name>S-adenosyl-L-methionine</name>
        <dbReference type="ChEBI" id="CHEBI:59789"/>
    </ligand>
</feature>
<accession>B5FGG5</accession>
<sequence length="272" mass="31023">MSTRNDVHLGHKARKRFGQNFLNDPYVIDGIVSAINPLPGQNLVEIGPGLGAITEPVGREVDKFTVIELDRDLAERLRNHPELGSKLTIHEGDAMRFDFTQLIKENNKLRIFGNLPYNISTPLMFHLFEFHKDVQDMHFMLQKEVVNRLAAGPGTKAYGRLTVMAQYFCKVMPVLEVPPTAFVPPPKVDSAVVRLVPYETLPYPATNLKWLDRVCREGFNQRRKTVRNCYKALLTKEQLEELGINPSMRPENLTLEQFVNMANWLDANHSAE</sequence>
<comment type="function">
    <text evidence="1">Specifically dimethylates two adjacent adenosines (A1518 and A1519) in the loop of a conserved hairpin near the 3'-end of 16S rRNA in the 30S particle. May play a critical role in biogenesis of 30S subunits.</text>
</comment>
<comment type="catalytic activity">
    <reaction evidence="1">
        <text>adenosine(1518)/adenosine(1519) in 16S rRNA + 4 S-adenosyl-L-methionine = N(6)-dimethyladenosine(1518)/N(6)-dimethyladenosine(1519) in 16S rRNA + 4 S-adenosyl-L-homocysteine + 4 H(+)</text>
        <dbReference type="Rhea" id="RHEA:19609"/>
        <dbReference type="Rhea" id="RHEA-COMP:10232"/>
        <dbReference type="Rhea" id="RHEA-COMP:10233"/>
        <dbReference type="ChEBI" id="CHEBI:15378"/>
        <dbReference type="ChEBI" id="CHEBI:57856"/>
        <dbReference type="ChEBI" id="CHEBI:59789"/>
        <dbReference type="ChEBI" id="CHEBI:74411"/>
        <dbReference type="ChEBI" id="CHEBI:74493"/>
        <dbReference type="EC" id="2.1.1.182"/>
    </reaction>
</comment>
<comment type="subcellular location">
    <subcellularLocation>
        <location evidence="1">Cytoplasm</location>
    </subcellularLocation>
</comment>
<comment type="similarity">
    <text evidence="1">Belongs to the class I-like SAM-binding methyltransferase superfamily. rRNA adenine N(6)-methyltransferase family. RsmA subfamily.</text>
</comment>
<keyword id="KW-0963">Cytoplasm</keyword>
<keyword id="KW-0489">Methyltransferase</keyword>
<keyword id="KW-0694">RNA-binding</keyword>
<keyword id="KW-0698">rRNA processing</keyword>
<keyword id="KW-0949">S-adenosyl-L-methionine</keyword>
<keyword id="KW-0808">Transferase</keyword>
<proteinExistence type="inferred from homology"/>
<name>RSMA_ALIFM</name>
<organism>
    <name type="scientific">Aliivibrio fischeri (strain MJ11)</name>
    <name type="common">Vibrio fischeri</name>
    <dbReference type="NCBI Taxonomy" id="388396"/>
    <lineage>
        <taxon>Bacteria</taxon>
        <taxon>Pseudomonadati</taxon>
        <taxon>Pseudomonadota</taxon>
        <taxon>Gammaproteobacteria</taxon>
        <taxon>Vibrionales</taxon>
        <taxon>Vibrionaceae</taxon>
        <taxon>Aliivibrio</taxon>
    </lineage>
</organism>
<dbReference type="EC" id="2.1.1.182" evidence="1"/>
<dbReference type="EMBL" id="CP001139">
    <property type="protein sequence ID" value="ACH65170.1"/>
    <property type="molecule type" value="Genomic_DNA"/>
</dbReference>
<dbReference type="RefSeq" id="WP_005417325.1">
    <property type="nucleotide sequence ID" value="NC_011184.1"/>
</dbReference>
<dbReference type="SMR" id="B5FGG5"/>
<dbReference type="GeneID" id="54162906"/>
<dbReference type="KEGG" id="vfm:VFMJ11_0274"/>
<dbReference type="HOGENOM" id="CLU_041220_0_1_6"/>
<dbReference type="Proteomes" id="UP000001857">
    <property type="component" value="Chromosome I"/>
</dbReference>
<dbReference type="GO" id="GO:0005829">
    <property type="term" value="C:cytosol"/>
    <property type="evidence" value="ECO:0007669"/>
    <property type="project" value="TreeGrafter"/>
</dbReference>
<dbReference type="GO" id="GO:0052908">
    <property type="term" value="F:16S rRNA (adenine(1518)-N(6)/adenine(1519)-N(6))-dimethyltransferase activity"/>
    <property type="evidence" value="ECO:0007669"/>
    <property type="project" value="UniProtKB-EC"/>
</dbReference>
<dbReference type="GO" id="GO:0003723">
    <property type="term" value="F:RNA binding"/>
    <property type="evidence" value="ECO:0007669"/>
    <property type="project" value="UniProtKB-KW"/>
</dbReference>
<dbReference type="FunFam" id="1.10.8.100:FF:000001">
    <property type="entry name" value="Ribosomal RNA small subunit methyltransferase A"/>
    <property type="match status" value="1"/>
</dbReference>
<dbReference type="FunFam" id="3.40.50.150:FF:000006">
    <property type="entry name" value="Ribosomal RNA small subunit methyltransferase A"/>
    <property type="match status" value="1"/>
</dbReference>
<dbReference type="Gene3D" id="1.10.8.100">
    <property type="entry name" value="Ribosomal RNA adenine dimethylase-like, domain 2"/>
    <property type="match status" value="1"/>
</dbReference>
<dbReference type="Gene3D" id="3.40.50.150">
    <property type="entry name" value="Vaccinia Virus protein VP39"/>
    <property type="match status" value="1"/>
</dbReference>
<dbReference type="HAMAP" id="MF_00607">
    <property type="entry name" value="16SrRNA_methyltr_A"/>
    <property type="match status" value="1"/>
</dbReference>
<dbReference type="InterPro" id="IPR001737">
    <property type="entry name" value="KsgA/Erm"/>
</dbReference>
<dbReference type="InterPro" id="IPR023165">
    <property type="entry name" value="rRNA_Ade_diMease-like_C"/>
</dbReference>
<dbReference type="InterPro" id="IPR020596">
    <property type="entry name" value="rRNA_Ade_Mease_Trfase_CS"/>
</dbReference>
<dbReference type="InterPro" id="IPR020598">
    <property type="entry name" value="rRNA_Ade_methylase_Trfase_N"/>
</dbReference>
<dbReference type="InterPro" id="IPR011530">
    <property type="entry name" value="rRNA_adenine_dimethylase"/>
</dbReference>
<dbReference type="InterPro" id="IPR029063">
    <property type="entry name" value="SAM-dependent_MTases_sf"/>
</dbReference>
<dbReference type="NCBIfam" id="TIGR00755">
    <property type="entry name" value="ksgA"/>
    <property type="match status" value="1"/>
</dbReference>
<dbReference type="PANTHER" id="PTHR11727">
    <property type="entry name" value="DIMETHYLADENOSINE TRANSFERASE"/>
    <property type="match status" value="1"/>
</dbReference>
<dbReference type="PANTHER" id="PTHR11727:SF7">
    <property type="entry name" value="DIMETHYLADENOSINE TRANSFERASE-RELATED"/>
    <property type="match status" value="1"/>
</dbReference>
<dbReference type="Pfam" id="PF00398">
    <property type="entry name" value="RrnaAD"/>
    <property type="match status" value="1"/>
</dbReference>
<dbReference type="SMART" id="SM00650">
    <property type="entry name" value="rADc"/>
    <property type="match status" value="1"/>
</dbReference>
<dbReference type="SUPFAM" id="SSF53335">
    <property type="entry name" value="S-adenosyl-L-methionine-dependent methyltransferases"/>
    <property type="match status" value="1"/>
</dbReference>
<dbReference type="PROSITE" id="PS01131">
    <property type="entry name" value="RRNA_A_DIMETH"/>
    <property type="match status" value="1"/>
</dbReference>
<dbReference type="PROSITE" id="PS51689">
    <property type="entry name" value="SAM_RNA_A_N6_MT"/>
    <property type="match status" value="1"/>
</dbReference>
<evidence type="ECO:0000255" key="1">
    <source>
        <dbReference type="HAMAP-Rule" id="MF_00607"/>
    </source>
</evidence>
<protein>
    <recommendedName>
        <fullName evidence="1">Ribosomal RNA small subunit methyltransferase A</fullName>
        <ecNumber evidence="1">2.1.1.182</ecNumber>
    </recommendedName>
    <alternativeName>
        <fullName evidence="1">16S rRNA (adenine(1518)-N(6)/adenine(1519)-N(6))-dimethyltransferase</fullName>
    </alternativeName>
    <alternativeName>
        <fullName evidence="1">16S rRNA dimethyladenosine transferase</fullName>
    </alternativeName>
    <alternativeName>
        <fullName evidence="1">16S rRNA dimethylase</fullName>
    </alternativeName>
    <alternativeName>
        <fullName evidence="1">S-adenosylmethionine-6-N', N'-adenosyl(rRNA) dimethyltransferase</fullName>
    </alternativeName>
</protein>